<reference key="1">
    <citation type="submission" date="2002-09" db="EMBL/GenBank/DDBJ databases">
        <title>Phylogenetic relationships among the major lineages of Asparagales based on a large chloroplast data set.</title>
        <authorList>
            <person name="McPherson M.A."/>
            <person name="Rai H.S."/>
            <person name="Wong W.A."/>
            <person name="Graham S.W."/>
        </authorList>
    </citation>
    <scope>NUCLEOTIDE SEQUENCE [GENOMIC DNA]</scope>
</reference>
<sequence length="43" mass="4662">METATLVAISISGLLVSFTGYALYTAFGQPSQQLRDPFEEHGD</sequence>
<keyword id="KW-0150">Chloroplast</keyword>
<keyword id="KW-0472">Membrane</keyword>
<keyword id="KW-0934">Plastid</keyword>
<keyword id="KW-0793">Thylakoid</keyword>
<keyword id="KW-0812">Transmembrane</keyword>
<keyword id="KW-1133">Transmembrane helix</keyword>
<name>PSBN_ANACO</name>
<protein>
    <recommendedName>
        <fullName evidence="1">Protein PsbN</fullName>
    </recommendedName>
</protein>
<proteinExistence type="inferred from homology"/>
<accession>Q67I70</accession>
<feature type="chain" id="PRO_0000207865" description="Protein PsbN">
    <location>
        <begin position="1"/>
        <end position="43"/>
    </location>
</feature>
<feature type="transmembrane region" description="Helical" evidence="1">
    <location>
        <begin position="5"/>
        <end position="27"/>
    </location>
</feature>
<dbReference type="EMBL" id="AY147507">
    <property type="protein sequence ID" value="AAN32131.1"/>
    <property type="molecule type" value="Genomic_DNA"/>
</dbReference>
<dbReference type="RefSeq" id="YP_009116370.1">
    <property type="nucleotide sequence ID" value="NC_026220.1"/>
</dbReference>
<dbReference type="SMR" id="Q67I70"/>
<dbReference type="GeneID" id="22909427"/>
<dbReference type="OrthoDB" id="1860403at2759"/>
<dbReference type="Proteomes" id="UP000515123">
    <property type="component" value="Chloroplast Pltd"/>
</dbReference>
<dbReference type="GO" id="GO:0009535">
    <property type="term" value="C:chloroplast thylakoid membrane"/>
    <property type="evidence" value="ECO:0007669"/>
    <property type="project" value="UniProtKB-SubCell"/>
</dbReference>
<dbReference type="GO" id="GO:0015979">
    <property type="term" value="P:photosynthesis"/>
    <property type="evidence" value="ECO:0007669"/>
    <property type="project" value="InterPro"/>
</dbReference>
<dbReference type="HAMAP" id="MF_00293">
    <property type="entry name" value="PSII_PsbN"/>
    <property type="match status" value="1"/>
</dbReference>
<dbReference type="InterPro" id="IPR003398">
    <property type="entry name" value="PSII_PsbN"/>
</dbReference>
<dbReference type="PANTHER" id="PTHR35326">
    <property type="entry name" value="PROTEIN PSBN"/>
    <property type="match status" value="1"/>
</dbReference>
<dbReference type="PANTHER" id="PTHR35326:SF3">
    <property type="entry name" value="PROTEIN PSBN"/>
    <property type="match status" value="1"/>
</dbReference>
<dbReference type="Pfam" id="PF02468">
    <property type="entry name" value="PsbN"/>
    <property type="match status" value="1"/>
</dbReference>
<geneLocation type="chloroplast"/>
<comment type="function">
    <text evidence="1">May play a role in photosystem I and II biogenesis.</text>
</comment>
<comment type="subcellular location">
    <subcellularLocation>
        <location evidence="1">Plastid</location>
        <location evidence="1">Chloroplast thylakoid membrane</location>
        <topology evidence="1">Single-pass membrane protein</topology>
    </subcellularLocation>
</comment>
<comment type="similarity">
    <text evidence="1">Belongs to the PsbN family.</text>
</comment>
<comment type="caution">
    <text evidence="1">Originally thought to be a component of PSII; based on experiments in Synechocystis, N.tabacum and barley, and its absence from PSII in T.elongatus and T.vulcanus, this is probably not true.</text>
</comment>
<organism>
    <name type="scientific">Ananas comosus</name>
    <name type="common">Pineapple</name>
    <name type="synonym">Ananas ananas</name>
    <dbReference type="NCBI Taxonomy" id="4615"/>
    <lineage>
        <taxon>Eukaryota</taxon>
        <taxon>Viridiplantae</taxon>
        <taxon>Streptophyta</taxon>
        <taxon>Embryophyta</taxon>
        <taxon>Tracheophyta</taxon>
        <taxon>Spermatophyta</taxon>
        <taxon>Magnoliopsida</taxon>
        <taxon>Liliopsida</taxon>
        <taxon>Poales</taxon>
        <taxon>Bromeliaceae</taxon>
        <taxon>Bromelioideae</taxon>
        <taxon>Ananas</taxon>
    </lineage>
</organism>
<gene>
    <name evidence="1" type="primary">psbN</name>
</gene>
<evidence type="ECO:0000255" key="1">
    <source>
        <dbReference type="HAMAP-Rule" id="MF_00293"/>
    </source>
</evidence>